<keyword id="KW-0067">ATP-binding</keyword>
<keyword id="KW-0227">DNA damage</keyword>
<keyword id="KW-0234">DNA repair</keyword>
<keyword id="KW-0238">DNA-binding</keyword>
<keyword id="KW-0378">Hydrolase</keyword>
<keyword id="KW-0479">Metal-binding</keyword>
<keyword id="KW-0547">Nucleotide-binding</keyword>
<keyword id="KW-1185">Reference proteome</keyword>
<keyword id="KW-0346">Stress response</keyword>
<keyword id="KW-0862">Zinc</keyword>
<keyword id="KW-0863">Zinc-finger</keyword>
<organism>
    <name type="scientific">Mycolicibacterium smegmatis (strain ATCC 700084 / mc(2)155)</name>
    <name type="common">Mycobacterium smegmatis</name>
    <dbReference type="NCBI Taxonomy" id="246196"/>
    <lineage>
        <taxon>Bacteria</taxon>
        <taxon>Bacillati</taxon>
        <taxon>Actinomycetota</taxon>
        <taxon>Actinomycetes</taxon>
        <taxon>Mycobacteriales</taxon>
        <taxon>Mycobacteriaceae</taxon>
        <taxon>Mycolicibacterium</taxon>
    </lineage>
</organism>
<reference key="1">
    <citation type="submission" date="2006-10" db="EMBL/GenBank/DDBJ databases">
        <authorList>
            <person name="Fleischmann R.D."/>
            <person name="Dodson R.J."/>
            <person name="Haft D.H."/>
            <person name="Merkel J.S."/>
            <person name="Nelson W.C."/>
            <person name="Fraser C.M."/>
        </authorList>
    </citation>
    <scope>NUCLEOTIDE SEQUENCE [LARGE SCALE GENOMIC DNA]</scope>
    <source>
        <strain>ATCC 700084 / mc(2)155</strain>
    </source>
</reference>
<reference key="2">
    <citation type="journal article" date="2007" name="Genome Biol.">
        <title>Interrupted coding sequences in Mycobacterium smegmatis: authentic mutations or sequencing errors?</title>
        <authorList>
            <person name="Deshayes C."/>
            <person name="Perrodou E."/>
            <person name="Gallien S."/>
            <person name="Euphrasie D."/>
            <person name="Schaeffer C."/>
            <person name="Van-Dorsselaer A."/>
            <person name="Poch O."/>
            <person name="Lecompte O."/>
            <person name="Reyrat J.-M."/>
        </authorList>
    </citation>
    <scope>NUCLEOTIDE SEQUENCE [LARGE SCALE GENOMIC DNA]</scope>
    <source>
        <strain>ATCC 700084 / mc(2)155</strain>
    </source>
</reference>
<reference key="3">
    <citation type="journal article" date="2009" name="Genome Res.">
        <title>Ortho-proteogenomics: multiple proteomes investigation through orthology and a new MS-based protocol.</title>
        <authorList>
            <person name="Gallien S."/>
            <person name="Perrodou E."/>
            <person name="Carapito C."/>
            <person name="Deshayes C."/>
            <person name="Reyrat J.-M."/>
            <person name="Van Dorsselaer A."/>
            <person name="Poch O."/>
            <person name="Schaeffer C."/>
            <person name="Lecompte O."/>
        </authorList>
    </citation>
    <scope>NUCLEOTIDE SEQUENCE [LARGE SCALE GENOMIC DNA]</scope>
    <source>
        <strain>ATCC 700084 / mc(2)155</strain>
    </source>
</reference>
<reference key="4">
    <citation type="journal article" date="2013" name="J. Biol. Chem.">
        <title>Radiation-sensitive gene A (RadA) targets DisA, DNA integrity scanning protein A, to negatively affect cyclic di-AMP synthesis activity in Mycobacterium smegmatis.</title>
        <authorList>
            <person name="Zhang L."/>
            <person name="He Z.G."/>
        </authorList>
    </citation>
    <scope>FUNCTION AS AN ANTAGONIST OF DISA</scope>
    <scope>OPERON STRUCTURE</scope>
    <scope>INTERACTION WITH DISA</scope>
    <source>
        <strain>ATCC 700084 / mc(2)155</strain>
    </source>
</reference>
<comment type="function">
    <text evidence="1 2">DNA-dependent ATPase involved in processing of recombination intermediates, plays a role in repairing DNA breaks. Stimulates the branch migration of RecA-mediated strand transfer reactions, allowing the 3' invading strand to extend heteroduplex DNA faster. Binds ssDNA in the presence of ADP but not other nucleotides, has ATPase activity that is stimulated by ssDNA and various branched DNA structures, but inhibited by SSB. Does not have RecA's homology-searching function (By similarity). Also inhibits the diadenylate cyclase activity of DisA (PubMed:23760274).</text>
</comment>
<comment type="subunit">
    <text evidence="2">Interacts with DisA.</text>
</comment>
<comment type="induction">
    <text evidence="2">Forms part of an operon with disA.</text>
</comment>
<comment type="domain">
    <text evidence="1">Has a putative N-terminal zinc-finger, a middle region with homology to RecA with ATPase motifs including the RadA KNRFG motif, while the C-terminus is homologous to Lon protease.</text>
</comment>
<comment type="similarity">
    <text evidence="1">Belongs to the RecA family. RadA subfamily.</text>
</comment>
<name>RADA_MYCS2</name>
<accession>A0R563</accession>
<protein>
    <recommendedName>
        <fullName evidence="1">DNA repair protein RadA</fullName>
        <ecNumber evidence="1">3.6.4.-</ecNumber>
    </recommendedName>
    <alternativeName>
        <fullName evidence="1">Branch migration protein RadA</fullName>
    </alternativeName>
</protein>
<sequence>MAGSKIRSQYRCSECQHVAPKWVGRCANCGTWGTVDEVAVLAGNNKLNGAARRSVAPTSPAVPITSIDPGVTRHYPTGVSELDRVLGGGLVAGSVTLLAGDPGVGKSTLLLEVANRWAHSGKRALYLSGEESAGQIRLRAERTGCTHDQVYLAAESDLQIALGHIDEVKPSLVVVDSVQTMSTTEADGVTGGVTQVRAVTTSLTAYAKAAVGDPAVAMILVGHVTKDGAIAGPRSLEHLVDVVLHFEGDRASSLRMVRGVKNRFGAADEVGCFQLHDNGIECVSDPSGLFLDQRPLAVPGTAVTVTLDGKRPMIGEVQALVSPPAGPPRRAVSGIDSARAAMIGAVLQTRCRMPINSNDLYLSTVGGMRLTDPSADLAVALAIASAYFDIAMPMKAIAIGEVGLAGDLRRVTGMDRRLSEAARLGFTTAVVPPGVTSAPAGLKVVAADNIRAAVQTMREIAIAGAQ</sequence>
<feature type="chain" id="PRO_0000424182" description="DNA repair protein RadA">
    <location>
        <begin position="1"/>
        <end position="466"/>
    </location>
</feature>
<feature type="zinc finger region" description="C4-type" evidence="1">
    <location>
        <begin position="12"/>
        <end position="29"/>
    </location>
</feature>
<feature type="region of interest" description="Lon-protease-like" evidence="1">
    <location>
        <begin position="359"/>
        <end position="466"/>
    </location>
</feature>
<feature type="short sequence motif" description="RadA KNRFG motif" evidence="1">
    <location>
        <begin position="261"/>
        <end position="265"/>
    </location>
</feature>
<feature type="binding site" evidence="1">
    <location>
        <begin position="100"/>
        <end position="107"/>
    </location>
    <ligand>
        <name>ATP</name>
        <dbReference type="ChEBI" id="CHEBI:30616"/>
    </ligand>
</feature>
<gene>
    <name evidence="1" type="primary">radA</name>
    <name type="ordered locus">MSMEG_6079</name>
    <name type="ordered locus">MSMEI_5919</name>
</gene>
<dbReference type="EC" id="3.6.4.-" evidence="1"/>
<dbReference type="EMBL" id="CP000480">
    <property type="protein sequence ID" value="ABK69709.1"/>
    <property type="molecule type" value="Genomic_DNA"/>
</dbReference>
<dbReference type="EMBL" id="CP001663">
    <property type="protein sequence ID" value="AFP42352.1"/>
    <property type="molecule type" value="Genomic_DNA"/>
</dbReference>
<dbReference type="RefSeq" id="WP_011731022.1">
    <property type="nucleotide sequence ID" value="NZ_SIJM01000046.1"/>
</dbReference>
<dbReference type="RefSeq" id="YP_890301.1">
    <property type="nucleotide sequence ID" value="NC_008596.1"/>
</dbReference>
<dbReference type="SMR" id="A0R563"/>
<dbReference type="STRING" id="246196.MSMEG_6079"/>
<dbReference type="MEROPS" id="S16.004"/>
<dbReference type="PaxDb" id="246196-MSMEI_5919"/>
<dbReference type="GeneID" id="93460711"/>
<dbReference type="KEGG" id="msb:LJ00_30060"/>
<dbReference type="KEGG" id="msg:MSMEI_5919"/>
<dbReference type="KEGG" id="msm:MSMEG_6079"/>
<dbReference type="PATRIC" id="fig|246196.19.peg.5917"/>
<dbReference type="eggNOG" id="COG1066">
    <property type="taxonomic scope" value="Bacteria"/>
</dbReference>
<dbReference type="OrthoDB" id="9803906at2"/>
<dbReference type="Proteomes" id="UP000000757">
    <property type="component" value="Chromosome"/>
</dbReference>
<dbReference type="Proteomes" id="UP000006158">
    <property type="component" value="Chromosome"/>
</dbReference>
<dbReference type="GO" id="GO:0005829">
    <property type="term" value="C:cytosol"/>
    <property type="evidence" value="ECO:0007669"/>
    <property type="project" value="TreeGrafter"/>
</dbReference>
<dbReference type="GO" id="GO:0005524">
    <property type="term" value="F:ATP binding"/>
    <property type="evidence" value="ECO:0007669"/>
    <property type="project" value="UniProtKB-UniRule"/>
</dbReference>
<dbReference type="GO" id="GO:0016887">
    <property type="term" value="F:ATP hydrolysis activity"/>
    <property type="evidence" value="ECO:0007669"/>
    <property type="project" value="InterPro"/>
</dbReference>
<dbReference type="GO" id="GO:0140664">
    <property type="term" value="F:ATP-dependent DNA damage sensor activity"/>
    <property type="evidence" value="ECO:0007669"/>
    <property type="project" value="InterPro"/>
</dbReference>
<dbReference type="GO" id="GO:0003684">
    <property type="term" value="F:damaged DNA binding"/>
    <property type="evidence" value="ECO:0007669"/>
    <property type="project" value="InterPro"/>
</dbReference>
<dbReference type="GO" id="GO:0008270">
    <property type="term" value="F:zinc ion binding"/>
    <property type="evidence" value="ECO:0007669"/>
    <property type="project" value="UniProtKB-KW"/>
</dbReference>
<dbReference type="GO" id="GO:0000725">
    <property type="term" value="P:recombinational repair"/>
    <property type="evidence" value="ECO:0007669"/>
    <property type="project" value="UniProtKB-UniRule"/>
</dbReference>
<dbReference type="CDD" id="cd01121">
    <property type="entry name" value="RadA_SMS_N"/>
    <property type="match status" value="1"/>
</dbReference>
<dbReference type="FunFam" id="3.40.50.300:FF:000050">
    <property type="entry name" value="DNA repair protein RadA"/>
    <property type="match status" value="1"/>
</dbReference>
<dbReference type="Gene3D" id="3.30.230.10">
    <property type="match status" value="1"/>
</dbReference>
<dbReference type="Gene3D" id="3.40.50.300">
    <property type="entry name" value="P-loop containing nucleotide triphosphate hydrolases"/>
    <property type="match status" value="1"/>
</dbReference>
<dbReference type="HAMAP" id="MF_01498">
    <property type="entry name" value="RadA_bact"/>
    <property type="match status" value="1"/>
</dbReference>
<dbReference type="InterPro" id="IPR003593">
    <property type="entry name" value="AAA+_ATPase"/>
</dbReference>
<dbReference type="InterPro" id="IPR004504">
    <property type="entry name" value="DNA_repair_RadA"/>
</dbReference>
<dbReference type="InterPro" id="IPR027417">
    <property type="entry name" value="P-loop_NTPase"/>
</dbReference>
<dbReference type="InterPro" id="IPR020588">
    <property type="entry name" value="RecA_ATP-bd"/>
</dbReference>
<dbReference type="InterPro" id="IPR020568">
    <property type="entry name" value="Ribosomal_Su5_D2-typ_SF"/>
</dbReference>
<dbReference type="InterPro" id="IPR014721">
    <property type="entry name" value="Ribsml_uS5_D2-typ_fold_subgr"/>
</dbReference>
<dbReference type="InterPro" id="IPR041166">
    <property type="entry name" value="Rubredoxin_2"/>
</dbReference>
<dbReference type="NCBIfam" id="TIGR00416">
    <property type="entry name" value="sms"/>
    <property type="match status" value="1"/>
</dbReference>
<dbReference type="PANTHER" id="PTHR32472">
    <property type="entry name" value="DNA REPAIR PROTEIN RADA"/>
    <property type="match status" value="1"/>
</dbReference>
<dbReference type="PANTHER" id="PTHR32472:SF10">
    <property type="entry name" value="DNA REPAIR PROTEIN RADA-LIKE PROTEIN"/>
    <property type="match status" value="1"/>
</dbReference>
<dbReference type="Pfam" id="PF13481">
    <property type="entry name" value="AAA_25"/>
    <property type="match status" value="1"/>
</dbReference>
<dbReference type="Pfam" id="PF13541">
    <property type="entry name" value="ChlI"/>
    <property type="match status" value="1"/>
</dbReference>
<dbReference type="Pfam" id="PF18073">
    <property type="entry name" value="Zn_ribbon_LapB"/>
    <property type="match status" value="1"/>
</dbReference>
<dbReference type="PRINTS" id="PR01874">
    <property type="entry name" value="DNAREPAIRADA"/>
</dbReference>
<dbReference type="SMART" id="SM00382">
    <property type="entry name" value="AAA"/>
    <property type="match status" value="1"/>
</dbReference>
<dbReference type="SUPFAM" id="SSF52540">
    <property type="entry name" value="P-loop containing nucleoside triphosphate hydrolases"/>
    <property type="match status" value="1"/>
</dbReference>
<dbReference type="SUPFAM" id="SSF54211">
    <property type="entry name" value="Ribosomal protein S5 domain 2-like"/>
    <property type="match status" value="1"/>
</dbReference>
<dbReference type="PROSITE" id="PS50162">
    <property type="entry name" value="RECA_2"/>
    <property type="match status" value="1"/>
</dbReference>
<proteinExistence type="evidence at protein level"/>
<evidence type="ECO:0000255" key="1">
    <source>
        <dbReference type="HAMAP-Rule" id="MF_01498"/>
    </source>
</evidence>
<evidence type="ECO:0000269" key="2">
    <source>
    </source>
</evidence>